<protein>
    <recommendedName>
        <fullName evidence="1">Succinylglutamate desuccinylase</fullName>
        <ecNumber evidence="1">3.5.1.96</ecNumber>
    </recommendedName>
</protein>
<evidence type="ECO:0000255" key="1">
    <source>
        <dbReference type="HAMAP-Rule" id="MF_00767"/>
    </source>
</evidence>
<proteinExistence type="inferred from homology"/>
<accession>Q1BXN9</accession>
<reference key="1">
    <citation type="submission" date="2006-05" db="EMBL/GenBank/DDBJ databases">
        <title>Complete sequence of chromosome 1 of Burkholderia cenocepacia AU 1054.</title>
        <authorList>
            <consortium name="US DOE Joint Genome Institute"/>
            <person name="Copeland A."/>
            <person name="Lucas S."/>
            <person name="Lapidus A."/>
            <person name="Barry K."/>
            <person name="Detter J.C."/>
            <person name="Glavina del Rio T."/>
            <person name="Hammon N."/>
            <person name="Israni S."/>
            <person name="Dalin E."/>
            <person name="Tice H."/>
            <person name="Pitluck S."/>
            <person name="Chain P."/>
            <person name="Malfatti S."/>
            <person name="Shin M."/>
            <person name="Vergez L."/>
            <person name="Schmutz J."/>
            <person name="Larimer F."/>
            <person name="Land M."/>
            <person name="Hauser L."/>
            <person name="Kyrpides N."/>
            <person name="Lykidis A."/>
            <person name="LiPuma J.J."/>
            <person name="Konstantinidis K."/>
            <person name="Tiedje J.M."/>
            <person name="Richardson P."/>
        </authorList>
    </citation>
    <scope>NUCLEOTIDE SEQUENCE [LARGE SCALE GENOMIC DNA]</scope>
    <source>
        <strain>AU 1054</strain>
    </source>
</reference>
<name>ASTE_BURO1</name>
<feature type="chain" id="PRO_0000257704" description="Succinylglutamate desuccinylase">
    <location>
        <begin position="1"/>
        <end position="342"/>
    </location>
</feature>
<feature type="active site" evidence="1">
    <location>
        <position position="222"/>
    </location>
</feature>
<feature type="binding site" evidence="1">
    <location>
        <position position="64"/>
    </location>
    <ligand>
        <name>Zn(2+)</name>
        <dbReference type="ChEBI" id="CHEBI:29105"/>
    </ligand>
</feature>
<feature type="binding site" evidence="1">
    <location>
        <position position="67"/>
    </location>
    <ligand>
        <name>Zn(2+)</name>
        <dbReference type="ChEBI" id="CHEBI:29105"/>
    </ligand>
</feature>
<feature type="binding site" evidence="1">
    <location>
        <position position="159"/>
    </location>
    <ligand>
        <name>Zn(2+)</name>
        <dbReference type="ChEBI" id="CHEBI:29105"/>
    </ligand>
</feature>
<keyword id="KW-0056">Arginine metabolism</keyword>
<keyword id="KW-0378">Hydrolase</keyword>
<keyword id="KW-0479">Metal-binding</keyword>
<keyword id="KW-0862">Zinc</keyword>
<sequence>MPAAALLDDFLAFTLAGDAPAERDGACAGGAVRWQWLGDGLLAFEPAATDAAARASVLVSAGVHGDETAPIELLSMLARDLVAGALPLACRLLVVLGNVPAMRAGERYLDDDLNRLFSGRHAQVPASREAPRAAQLEAAASAFFGAAPAGSARWHIDMHTAIRASVFEQFALLPHTGTPPTRAMVEWLGDARIAAVLLHTAKGNTYSHFTAEHCGALACTLELGKVRPFGQNDLTRFAPADRAVRKLVSGGRAEGGATLPRVFTVIDQITKQSDALELFVAADVANFTAFTRGTVLAQDGDYRYTVKHDEERIVFPNPTVKPGLRAGLLVVDTTRDTLAALV</sequence>
<organism>
    <name type="scientific">Burkholderia orbicola (strain AU 1054)</name>
    <dbReference type="NCBI Taxonomy" id="331271"/>
    <lineage>
        <taxon>Bacteria</taxon>
        <taxon>Pseudomonadati</taxon>
        <taxon>Pseudomonadota</taxon>
        <taxon>Betaproteobacteria</taxon>
        <taxon>Burkholderiales</taxon>
        <taxon>Burkholderiaceae</taxon>
        <taxon>Burkholderia</taxon>
        <taxon>Burkholderia cepacia complex</taxon>
        <taxon>Burkholderia orbicola</taxon>
    </lineage>
</organism>
<gene>
    <name evidence="1" type="primary">astE</name>
    <name type="ordered locus">Bcen_0706</name>
</gene>
<dbReference type="EC" id="3.5.1.96" evidence="1"/>
<dbReference type="EMBL" id="CP000378">
    <property type="protein sequence ID" value="ABF75616.1"/>
    <property type="molecule type" value="Genomic_DNA"/>
</dbReference>
<dbReference type="SMR" id="Q1BXN9"/>
<dbReference type="HOGENOM" id="CLU_071608_0_0_4"/>
<dbReference type="UniPathway" id="UPA00185">
    <property type="reaction ID" value="UER00283"/>
</dbReference>
<dbReference type="GO" id="GO:0016788">
    <property type="term" value="F:hydrolase activity, acting on ester bonds"/>
    <property type="evidence" value="ECO:0007669"/>
    <property type="project" value="UniProtKB-UniRule"/>
</dbReference>
<dbReference type="GO" id="GO:0009017">
    <property type="term" value="F:succinylglutamate desuccinylase activity"/>
    <property type="evidence" value="ECO:0007669"/>
    <property type="project" value="UniProtKB-EC"/>
</dbReference>
<dbReference type="GO" id="GO:0008270">
    <property type="term" value="F:zinc ion binding"/>
    <property type="evidence" value="ECO:0007669"/>
    <property type="project" value="UniProtKB-UniRule"/>
</dbReference>
<dbReference type="GO" id="GO:0019544">
    <property type="term" value="P:arginine catabolic process to glutamate"/>
    <property type="evidence" value="ECO:0007669"/>
    <property type="project" value="UniProtKB-UniRule"/>
</dbReference>
<dbReference type="GO" id="GO:0019545">
    <property type="term" value="P:arginine catabolic process to succinate"/>
    <property type="evidence" value="ECO:0007669"/>
    <property type="project" value="UniProtKB-UniRule"/>
</dbReference>
<dbReference type="CDD" id="cd03855">
    <property type="entry name" value="M14_ASTE"/>
    <property type="match status" value="1"/>
</dbReference>
<dbReference type="Gene3D" id="3.40.630.10">
    <property type="entry name" value="Zn peptidases"/>
    <property type="match status" value="1"/>
</dbReference>
<dbReference type="HAMAP" id="MF_00767">
    <property type="entry name" value="Arg_catab_AstE"/>
    <property type="match status" value="1"/>
</dbReference>
<dbReference type="InterPro" id="IPR050178">
    <property type="entry name" value="AspA/AstE_fam"/>
</dbReference>
<dbReference type="InterPro" id="IPR055438">
    <property type="entry name" value="AstE_AspA_cat"/>
</dbReference>
<dbReference type="InterPro" id="IPR007036">
    <property type="entry name" value="Aste_AspA_hybrid_dom"/>
</dbReference>
<dbReference type="InterPro" id="IPR016681">
    <property type="entry name" value="SuccinylGlu_desuccinylase"/>
</dbReference>
<dbReference type="NCBIfam" id="TIGR03242">
    <property type="entry name" value="arg_catab_astE"/>
    <property type="match status" value="1"/>
</dbReference>
<dbReference type="NCBIfam" id="NF003706">
    <property type="entry name" value="PRK05324.1"/>
    <property type="match status" value="1"/>
</dbReference>
<dbReference type="PANTHER" id="PTHR15162">
    <property type="entry name" value="ASPARTOACYLASE"/>
    <property type="match status" value="1"/>
</dbReference>
<dbReference type="PANTHER" id="PTHR15162:SF7">
    <property type="entry name" value="SUCCINYLGLUTAMATE DESUCCINYLASE"/>
    <property type="match status" value="1"/>
</dbReference>
<dbReference type="Pfam" id="PF24827">
    <property type="entry name" value="AstE_AspA_cat"/>
    <property type="match status" value="1"/>
</dbReference>
<dbReference type="Pfam" id="PF04952">
    <property type="entry name" value="AstE_AspA_hybrid"/>
    <property type="match status" value="1"/>
</dbReference>
<dbReference type="PIRSF" id="PIRSF017020">
    <property type="entry name" value="AstE"/>
    <property type="match status" value="1"/>
</dbReference>
<dbReference type="SUPFAM" id="SSF53187">
    <property type="entry name" value="Zn-dependent exopeptidases"/>
    <property type="match status" value="1"/>
</dbReference>
<comment type="function">
    <text evidence="1">Transforms N(2)-succinylglutamate into succinate and glutamate.</text>
</comment>
<comment type="catalytic activity">
    <reaction evidence="1">
        <text>N-succinyl-L-glutamate + H2O = L-glutamate + succinate</text>
        <dbReference type="Rhea" id="RHEA:15169"/>
        <dbReference type="ChEBI" id="CHEBI:15377"/>
        <dbReference type="ChEBI" id="CHEBI:29985"/>
        <dbReference type="ChEBI" id="CHEBI:30031"/>
        <dbReference type="ChEBI" id="CHEBI:58763"/>
        <dbReference type="EC" id="3.5.1.96"/>
    </reaction>
</comment>
<comment type="cofactor">
    <cofactor evidence="1">
        <name>Zn(2+)</name>
        <dbReference type="ChEBI" id="CHEBI:29105"/>
    </cofactor>
    <text evidence="1">Binds 1 zinc ion per subunit.</text>
</comment>
<comment type="pathway">
    <text evidence="1">Amino-acid degradation; L-arginine degradation via AST pathway; L-glutamate and succinate from L-arginine: step 5/5.</text>
</comment>
<comment type="similarity">
    <text evidence="1">Belongs to the AspA/AstE family. Succinylglutamate desuccinylase subfamily.</text>
</comment>